<protein>
    <recommendedName>
        <fullName evidence="1">FMN-dependent NADH:quinone oxidoreductase 2</fullName>
        <ecNumber evidence="1">1.6.5.-</ecNumber>
    </recommendedName>
    <alternativeName>
        <fullName evidence="1">Azo-dye reductase 2</fullName>
    </alternativeName>
    <alternativeName>
        <fullName evidence="1">FMN-dependent NADH-azo compound oxidoreductase 2</fullName>
    </alternativeName>
    <alternativeName>
        <fullName evidence="1">FMN-dependent NADH-azoreductase 2</fullName>
        <ecNumber evidence="1">1.7.1.17</ecNumber>
    </alternativeName>
</protein>
<name>AZOR2_BURL3</name>
<reference key="1">
    <citation type="submission" date="2005-10" db="EMBL/GenBank/DDBJ databases">
        <title>Complete sequence of chromosome 2 of Burkholderia sp. 383.</title>
        <authorList>
            <consortium name="US DOE Joint Genome Institute"/>
            <person name="Copeland A."/>
            <person name="Lucas S."/>
            <person name="Lapidus A."/>
            <person name="Barry K."/>
            <person name="Detter J.C."/>
            <person name="Glavina T."/>
            <person name="Hammon N."/>
            <person name="Israni S."/>
            <person name="Pitluck S."/>
            <person name="Chain P."/>
            <person name="Malfatti S."/>
            <person name="Shin M."/>
            <person name="Vergez L."/>
            <person name="Schmutz J."/>
            <person name="Larimer F."/>
            <person name="Land M."/>
            <person name="Kyrpides N."/>
            <person name="Lykidis A."/>
            <person name="Richardson P."/>
        </authorList>
    </citation>
    <scope>NUCLEOTIDE SEQUENCE [LARGE SCALE GENOMIC DNA]</scope>
    <source>
        <strain>ATCC 17760 / DSM 23089 / LMG 22485 / NCIMB 9086 / R18194 / 383</strain>
    </source>
</reference>
<feature type="chain" id="PRO_0000245902" description="FMN-dependent NADH:quinone oxidoreductase 2">
    <location>
        <begin position="1"/>
        <end position="207"/>
    </location>
</feature>
<feature type="binding site" evidence="1">
    <location>
        <position position="9"/>
    </location>
    <ligand>
        <name>FMN</name>
        <dbReference type="ChEBI" id="CHEBI:58210"/>
    </ligand>
</feature>
<feature type="binding site" evidence="1">
    <location>
        <begin position="15"/>
        <end position="17"/>
    </location>
    <ligand>
        <name>FMN</name>
        <dbReference type="ChEBI" id="CHEBI:58210"/>
    </ligand>
</feature>
<feature type="binding site" evidence="1">
    <location>
        <begin position="97"/>
        <end position="100"/>
    </location>
    <ligand>
        <name>FMN</name>
        <dbReference type="ChEBI" id="CHEBI:58210"/>
    </ligand>
</feature>
<evidence type="ECO:0000255" key="1">
    <source>
        <dbReference type="HAMAP-Rule" id="MF_01216"/>
    </source>
</evidence>
<comment type="function">
    <text evidence="1">Quinone reductase that provides resistance to thiol-specific stress caused by electrophilic quinones.</text>
</comment>
<comment type="function">
    <text evidence="1">Also exhibits azoreductase activity. Catalyzes the reductive cleavage of the azo bond in aromatic azo compounds to the corresponding amines.</text>
</comment>
<comment type="catalytic activity">
    <reaction evidence="1">
        <text>2 a quinone + NADH + H(+) = 2 a 1,4-benzosemiquinone + NAD(+)</text>
        <dbReference type="Rhea" id="RHEA:65952"/>
        <dbReference type="ChEBI" id="CHEBI:15378"/>
        <dbReference type="ChEBI" id="CHEBI:57540"/>
        <dbReference type="ChEBI" id="CHEBI:57945"/>
        <dbReference type="ChEBI" id="CHEBI:132124"/>
        <dbReference type="ChEBI" id="CHEBI:134225"/>
    </reaction>
</comment>
<comment type="catalytic activity">
    <reaction evidence="1">
        <text>N,N-dimethyl-1,4-phenylenediamine + anthranilate + 2 NAD(+) = 2-(4-dimethylaminophenyl)diazenylbenzoate + 2 NADH + 2 H(+)</text>
        <dbReference type="Rhea" id="RHEA:55872"/>
        <dbReference type="ChEBI" id="CHEBI:15378"/>
        <dbReference type="ChEBI" id="CHEBI:15783"/>
        <dbReference type="ChEBI" id="CHEBI:16567"/>
        <dbReference type="ChEBI" id="CHEBI:57540"/>
        <dbReference type="ChEBI" id="CHEBI:57945"/>
        <dbReference type="ChEBI" id="CHEBI:71579"/>
        <dbReference type="EC" id="1.7.1.17"/>
    </reaction>
</comment>
<comment type="cofactor">
    <cofactor evidence="1">
        <name>FMN</name>
        <dbReference type="ChEBI" id="CHEBI:58210"/>
    </cofactor>
    <text evidence="1">Binds 1 FMN per subunit.</text>
</comment>
<comment type="subunit">
    <text evidence="1">Homodimer.</text>
</comment>
<comment type="similarity">
    <text evidence="1">Belongs to the azoreductase type 1 family.</text>
</comment>
<accession>Q399J3</accession>
<dbReference type="EC" id="1.6.5.-" evidence="1"/>
<dbReference type="EC" id="1.7.1.17" evidence="1"/>
<dbReference type="EMBL" id="CP000152">
    <property type="protein sequence ID" value="ABB10868.1"/>
    <property type="molecule type" value="Genomic_DNA"/>
</dbReference>
<dbReference type="RefSeq" id="WP_011354362.1">
    <property type="nucleotide sequence ID" value="NC_007511.1"/>
</dbReference>
<dbReference type="SMR" id="Q399J3"/>
<dbReference type="GeneID" id="45097120"/>
<dbReference type="KEGG" id="bur:Bcep18194_B0754"/>
<dbReference type="PATRIC" id="fig|482957.22.peg.4374"/>
<dbReference type="HOGENOM" id="CLU_088964_1_0_4"/>
<dbReference type="Proteomes" id="UP000002705">
    <property type="component" value="Chromosome 2"/>
</dbReference>
<dbReference type="GO" id="GO:0009055">
    <property type="term" value="F:electron transfer activity"/>
    <property type="evidence" value="ECO:0007669"/>
    <property type="project" value="UniProtKB-UniRule"/>
</dbReference>
<dbReference type="GO" id="GO:0010181">
    <property type="term" value="F:FMN binding"/>
    <property type="evidence" value="ECO:0007669"/>
    <property type="project" value="UniProtKB-UniRule"/>
</dbReference>
<dbReference type="GO" id="GO:0016652">
    <property type="term" value="F:oxidoreductase activity, acting on NAD(P)H as acceptor"/>
    <property type="evidence" value="ECO:0007669"/>
    <property type="project" value="UniProtKB-UniRule"/>
</dbReference>
<dbReference type="GO" id="GO:0016655">
    <property type="term" value="F:oxidoreductase activity, acting on NAD(P)H, quinone or similar compound as acceptor"/>
    <property type="evidence" value="ECO:0007669"/>
    <property type="project" value="InterPro"/>
</dbReference>
<dbReference type="Gene3D" id="3.40.50.360">
    <property type="match status" value="1"/>
</dbReference>
<dbReference type="HAMAP" id="MF_01216">
    <property type="entry name" value="Azoreductase_type1"/>
    <property type="match status" value="1"/>
</dbReference>
<dbReference type="InterPro" id="IPR003680">
    <property type="entry name" value="Flavodoxin_fold"/>
</dbReference>
<dbReference type="InterPro" id="IPR029039">
    <property type="entry name" value="Flavoprotein-like_sf"/>
</dbReference>
<dbReference type="InterPro" id="IPR050104">
    <property type="entry name" value="FMN-dep_NADH:Q_OxRdtase_AzoR1"/>
</dbReference>
<dbReference type="InterPro" id="IPR023048">
    <property type="entry name" value="NADH:quinone_OxRdtase_FMN_depd"/>
</dbReference>
<dbReference type="PANTHER" id="PTHR43741">
    <property type="entry name" value="FMN-DEPENDENT NADH-AZOREDUCTASE 1"/>
    <property type="match status" value="1"/>
</dbReference>
<dbReference type="PANTHER" id="PTHR43741:SF4">
    <property type="entry name" value="FMN-DEPENDENT NADH:QUINONE OXIDOREDUCTASE"/>
    <property type="match status" value="1"/>
</dbReference>
<dbReference type="Pfam" id="PF02525">
    <property type="entry name" value="Flavodoxin_2"/>
    <property type="match status" value="1"/>
</dbReference>
<dbReference type="SUPFAM" id="SSF52218">
    <property type="entry name" value="Flavoproteins"/>
    <property type="match status" value="1"/>
</dbReference>
<proteinExistence type="inferred from homology"/>
<gene>
    <name evidence="1" type="primary">azoR2</name>
    <name type="ordered locus">Bcep18194_B0754</name>
</gene>
<organism>
    <name type="scientific">Burkholderia lata (strain ATCC 17760 / DSM 23089 / LMG 22485 / NCIMB 9086 / R18194 / 383)</name>
    <dbReference type="NCBI Taxonomy" id="482957"/>
    <lineage>
        <taxon>Bacteria</taxon>
        <taxon>Pseudomonadati</taxon>
        <taxon>Pseudomonadota</taxon>
        <taxon>Betaproteobacteria</taxon>
        <taxon>Burkholderiales</taxon>
        <taxon>Burkholderiaceae</taxon>
        <taxon>Burkholderia</taxon>
        <taxon>Burkholderia cepacia complex</taxon>
    </lineage>
</organism>
<sequence>MRLLNIVSSPRGARSASIAVARAFVDAYRQTGATIDVDTLNVWEEDLPDFDSGAIGAKYKGVANAPMDEAEQSIWRRIQSLVKRFQDADRIVVGVPMWNFGYPYKLKQLIDLVSQRNMLFTFDGNAYAPLLEIPRALVIHVRGQSREPGAGADNPGFRHQADYIEFWLRFIGVSEVRSLTVEHTWGARASDSIERAQARAVEMAAEF</sequence>
<keyword id="KW-0285">Flavoprotein</keyword>
<keyword id="KW-0288">FMN</keyword>
<keyword id="KW-0520">NAD</keyword>
<keyword id="KW-0560">Oxidoreductase</keyword>